<gene>
    <name evidence="1" type="primary">pyrH</name>
    <name type="ordered locus">MCA0569</name>
</gene>
<feature type="chain" id="PRO_1000053952" description="Uridylate kinase">
    <location>
        <begin position="1"/>
        <end position="239"/>
    </location>
</feature>
<feature type="region of interest" description="Involved in allosteric activation by GTP" evidence="1">
    <location>
        <begin position="20"/>
        <end position="25"/>
    </location>
</feature>
<feature type="binding site" evidence="1">
    <location>
        <begin position="12"/>
        <end position="15"/>
    </location>
    <ligand>
        <name>ATP</name>
        <dbReference type="ChEBI" id="CHEBI:30616"/>
    </ligand>
</feature>
<feature type="binding site" evidence="1">
    <location>
        <position position="54"/>
    </location>
    <ligand>
        <name>UMP</name>
        <dbReference type="ChEBI" id="CHEBI:57865"/>
    </ligand>
</feature>
<feature type="binding site" evidence="1">
    <location>
        <position position="55"/>
    </location>
    <ligand>
        <name>ATP</name>
        <dbReference type="ChEBI" id="CHEBI:30616"/>
    </ligand>
</feature>
<feature type="binding site" evidence="1">
    <location>
        <position position="59"/>
    </location>
    <ligand>
        <name>ATP</name>
        <dbReference type="ChEBI" id="CHEBI:30616"/>
    </ligand>
</feature>
<feature type="binding site" evidence="1">
    <location>
        <position position="74"/>
    </location>
    <ligand>
        <name>UMP</name>
        <dbReference type="ChEBI" id="CHEBI:57865"/>
    </ligand>
</feature>
<feature type="binding site" evidence="1">
    <location>
        <begin position="135"/>
        <end position="142"/>
    </location>
    <ligand>
        <name>UMP</name>
        <dbReference type="ChEBI" id="CHEBI:57865"/>
    </ligand>
</feature>
<feature type="binding site" evidence="1">
    <location>
        <position position="162"/>
    </location>
    <ligand>
        <name>ATP</name>
        <dbReference type="ChEBI" id="CHEBI:30616"/>
    </ligand>
</feature>
<feature type="binding site" evidence="1">
    <location>
        <position position="168"/>
    </location>
    <ligand>
        <name>ATP</name>
        <dbReference type="ChEBI" id="CHEBI:30616"/>
    </ligand>
</feature>
<feature type="binding site" evidence="1">
    <location>
        <position position="171"/>
    </location>
    <ligand>
        <name>ATP</name>
        <dbReference type="ChEBI" id="CHEBI:30616"/>
    </ligand>
</feature>
<keyword id="KW-0021">Allosteric enzyme</keyword>
<keyword id="KW-0067">ATP-binding</keyword>
<keyword id="KW-0963">Cytoplasm</keyword>
<keyword id="KW-0418">Kinase</keyword>
<keyword id="KW-0547">Nucleotide-binding</keyword>
<keyword id="KW-0665">Pyrimidine biosynthesis</keyword>
<keyword id="KW-1185">Reference proteome</keyword>
<keyword id="KW-0808">Transferase</keyword>
<comment type="function">
    <text evidence="1">Catalyzes the reversible phosphorylation of UMP to UDP.</text>
</comment>
<comment type="catalytic activity">
    <reaction evidence="1">
        <text>UMP + ATP = UDP + ADP</text>
        <dbReference type="Rhea" id="RHEA:24400"/>
        <dbReference type="ChEBI" id="CHEBI:30616"/>
        <dbReference type="ChEBI" id="CHEBI:57865"/>
        <dbReference type="ChEBI" id="CHEBI:58223"/>
        <dbReference type="ChEBI" id="CHEBI:456216"/>
        <dbReference type="EC" id="2.7.4.22"/>
    </reaction>
</comment>
<comment type="activity regulation">
    <text evidence="1">Allosterically activated by GTP. Inhibited by UTP.</text>
</comment>
<comment type="pathway">
    <text evidence="1">Pyrimidine metabolism; CTP biosynthesis via de novo pathway; UDP from UMP (UMPK route): step 1/1.</text>
</comment>
<comment type="subunit">
    <text evidence="1">Homohexamer.</text>
</comment>
<comment type="subcellular location">
    <subcellularLocation>
        <location evidence="1">Cytoplasm</location>
    </subcellularLocation>
</comment>
<comment type="similarity">
    <text evidence="1">Belongs to the UMP kinase family.</text>
</comment>
<evidence type="ECO:0000255" key="1">
    <source>
        <dbReference type="HAMAP-Rule" id="MF_01220"/>
    </source>
</evidence>
<name>PYRH_METCA</name>
<dbReference type="EC" id="2.7.4.22" evidence="1"/>
<dbReference type="EMBL" id="AE017282">
    <property type="protein sequence ID" value="AAU93241.1"/>
    <property type="molecule type" value="Genomic_DNA"/>
</dbReference>
<dbReference type="RefSeq" id="WP_010959917.1">
    <property type="nucleotide sequence ID" value="NC_002977.6"/>
</dbReference>
<dbReference type="SMR" id="Q60BA8"/>
<dbReference type="STRING" id="243233.MCA0569"/>
<dbReference type="GeneID" id="88222901"/>
<dbReference type="KEGG" id="mca:MCA0569"/>
<dbReference type="eggNOG" id="COG0528">
    <property type="taxonomic scope" value="Bacteria"/>
</dbReference>
<dbReference type="HOGENOM" id="CLU_033861_0_0_6"/>
<dbReference type="UniPathway" id="UPA00159">
    <property type="reaction ID" value="UER00275"/>
</dbReference>
<dbReference type="Proteomes" id="UP000006821">
    <property type="component" value="Chromosome"/>
</dbReference>
<dbReference type="GO" id="GO:0005829">
    <property type="term" value="C:cytosol"/>
    <property type="evidence" value="ECO:0007669"/>
    <property type="project" value="TreeGrafter"/>
</dbReference>
<dbReference type="GO" id="GO:0005524">
    <property type="term" value="F:ATP binding"/>
    <property type="evidence" value="ECO:0007669"/>
    <property type="project" value="UniProtKB-KW"/>
</dbReference>
<dbReference type="GO" id="GO:0033862">
    <property type="term" value="F:UMP kinase activity"/>
    <property type="evidence" value="ECO:0007669"/>
    <property type="project" value="UniProtKB-EC"/>
</dbReference>
<dbReference type="GO" id="GO:0044210">
    <property type="term" value="P:'de novo' CTP biosynthetic process"/>
    <property type="evidence" value="ECO:0007669"/>
    <property type="project" value="UniProtKB-UniRule"/>
</dbReference>
<dbReference type="GO" id="GO:0006225">
    <property type="term" value="P:UDP biosynthetic process"/>
    <property type="evidence" value="ECO:0007669"/>
    <property type="project" value="TreeGrafter"/>
</dbReference>
<dbReference type="CDD" id="cd04254">
    <property type="entry name" value="AAK_UMPK-PyrH-Ec"/>
    <property type="match status" value="1"/>
</dbReference>
<dbReference type="FunFam" id="3.40.1160.10:FF:000001">
    <property type="entry name" value="Uridylate kinase"/>
    <property type="match status" value="1"/>
</dbReference>
<dbReference type="Gene3D" id="3.40.1160.10">
    <property type="entry name" value="Acetylglutamate kinase-like"/>
    <property type="match status" value="1"/>
</dbReference>
<dbReference type="HAMAP" id="MF_01220_B">
    <property type="entry name" value="PyrH_B"/>
    <property type="match status" value="1"/>
</dbReference>
<dbReference type="InterPro" id="IPR036393">
    <property type="entry name" value="AceGlu_kinase-like_sf"/>
</dbReference>
<dbReference type="InterPro" id="IPR001048">
    <property type="entry name" value="Asp/Glu/Uridylate_kinase"/>
</dbReference>
<dbReference type="InterPro" id="IPR011817">
    <property type="entry name" value="Uridylate_kinase"/>
</dbReference>
<dbReference type="InterPro" id="IPR015963">
    <property type="entry name" value="Uridylate_kinase_bac"/>
</dbReference>
<dbReference type="NCBIfam" id="TIGR02075">
    <property type="entry name" value="pyrH_bact"/>
    <property type="match status" value="1"/>
</dbReference>
<dbReference type="PANTHER" id="PTHR42833">
    <property type="entry name" value="URIDYLATE KINASE"/>
    <property type="match status" value="1"/>
</dbReference>
<dbReference type="PANTHER" id="PTHR42833:SF4">
    <property type="entry name" value="URIDYLATE KINASE PUMPKIN, CHLOROPLASTIC"/>
    <property type="match status" value="1"/>
</dbReference>
<dbReference type="Pfam" id="PF00696">
    <property type="entry name" value="AA_kinase"/>
    <property type="match status" value="1"/>
</dbReference>
<dbReference type="PIRSF" id="PIRSF005650">
    <property type="entry name" value="Uridylate_kin"/>
    <property type="match status" value="1"/>
</dbReference>
<dbReference type="SUPFAM" id="SSF53633">
    <property type="entry name" value="Carbamate kinase-like"/>
    <property type="match status" value="1"/>
</dbReference>
<sequence length="239" mass="25967">MTEPVYKRILLKLSGEALMGDQGAGIDAEILKRLATEIDELCQAGVEVGLVIGGGNIVRGAEKASEGLDRVTGDHMGMLATVINALAMQDALENLGRPVRVMSALKINQVCEDYIRRRAVRHLEKGRVVVFAAGTGNPFFTTDSAASLRAIEIGADLLIKATKVDGVYSADPVKNPEAKFYTRLTYDEALDQRLNVMDTTALVLCRDYKMPLRVMNVFRQGAVMRLIRGDDIGSLLVTG</sequence>
<protein>
    <recommendedName>
        <fullName evidence="1">Uridylate kinase</fullName>
        <shortName evidence="1">UK</shortName>
        <ecNumber evidence="1">2.7.4.22</ecNumber>
    </recommendedName>
    <alternativeName>
        <fullName evidence="1">Uridine monophosphate kinase</fullName>
        <shortName evidence="1">UMP kinase</shortName>
        <shortName evidence="1">UMPK</shortName>
    </alternativeName>
</protein>
<accession>Q60BA8</accession>
<proteinExistence type="inferred from homology"/>
<organism>
    <name type="scientific">Methylococcus capsulatus (strain ATCC 33009 / NCIMB 11132 / Bath)</name>
    <dbReference type="NCBI Taxonomy" id="243233"/>
    <lineage>
        <taxon>Bacteria</taxon>
        <taxon>Pseudomonadati</taxon>
        <taxon>Pseudomonadota</taxon>
        <taxon>Gammaproteobacteria</taxon>
        <taxon>Methylococcales</taxon>
        <taxon>Methylococcaceae</taxon>
        <taxon>Methylococcus</taxon>
    </lineage>
</organism>
<reference key="1">
    <citation type="journal article" date="2004" name="PLoS Biol.">
        <title>Genomic insights into methanotrophy: the complete genome sequence of Methylococcus capsulatus (Bath).</title>
        <authorList>
            <person name="Ward N.L."/>
            <person name="Larsen O."/>
            <person name="Sakwa J."/>
            <person name="Bruseth L."/>
            <person name="Khouri H.M."/>
            <person name="Durkin A.S."/>
            <person name="Dimitrov G."/>
            <person name="Jiang L."/>
            <person name="Scanlan D."/>
            <person name="Kang K.H."/>
            <person name="Lewis M.R."/>
            <person name="Nelson K.E."/>
            <person name="Methe B.A."/>
            <person name="Wu M."/>
            <person name="Heidelberg J.F."/>
            <person name="Paulsen I.T."/>
            <person name="Fouts D.E."/>
            <person name="Ravel J."/>
            <person name="Tettelin H."/>
            <person name="Ren Q."/>
            <person name="Read T.D."/>
            <person name="DeBoy R.T."/>
            <person name="Seshadri R."/>
            <person name="Salzberg S.L."/>
            <person name="Jensen H.B."/>
            <person name="Birkeland N.K."/>
            <person name="Nelson W.C."/>
            <person name="Dodson R.J."/>
            <person name="Grindhaug S.H."/>
            <person name="Holt I.E."/>
            <person name="Eidhammer I."/>
            <person name="Jonasen I."/>
            <person name="Vanaken S."/>
            <person name="Utterback T.R."/>
            <person name="Feldblyum T.V."/>
            <person name="Fraser C.M."/>
            <person name="Lillehaug J.R."/>
            <person name="Eisen J.A."/>
        </authorList>
    </citation>
    <scope>NUCLEOTIDE SEQUENCE [LARGE SCALE GENOMIC DNA]</scope>
    <source>
        <strain>ATCC 33009 / NCIMB 11132 / Bath</strain>
    </source>
</reference>